<comment type="function">
    <text evidence="1">Catalyzes the transfer of the diacylglyceryl group from phosphatidylglycerol to the sulfhydryl group of the N-terminal cysteine of a prolipoprotein, the first step in the formation of mature lipoproteins.</text>
</comment>
<comment type="catalytic activity">
    <reaction evidence="1">
        <text>L-cysteinyl-[prolipoprotein] + a 1,2-diacyl-sn-glycero-3-phospho-(1'-sn-glycerol) = an S-1,2-diacyl-sn-glyceryl-L-cysteinyl-[prolipoprotein] + sn-glycerol 1-phosphate + H(+)</text>
        <dbReference type="Rhea" id="RHEA:56712"/>
        <dbReference type="Rhea" id="RHEA-COMP:14679"/>
        <dbReference type="Rhea" id="RHEA-COMP:14680"/>
        <dbReference type="ChEBI" id="CHEBI:15378"/>
        <dbReference type="ChEBI" id="CHEBI:29950"/>
        <dbReference type="ChEBI" id="CHEBI:57685"/>
        <dbReference type="ChEBI" id="CHEBI:64716"/>
        <dbReference type="ChEBI" id="CHEBI:140658"/>
        <dbReference type="EC" id="2.5.1.145"/>
    </reaction>
</comment>
<comment type="pathway">
    <text evidence="1">Protein modification; lipoprotein biosynthesis (diacylglyceryl transfer).</text>
</comment>
<comment type="subcellular location">
    <subcellularLocation>
        <location evidence="1">Cell inner membrane</location>
        <topology evidence="1">Multi-pass membrane protein</topology>
    </subcellularLocation>
</comment>
<comment type="similarity">
    <text evidence="1">Belongs to the Lgt family.</text>
</comment>
<sequence>MNNFLSCPAIPFPNFLDPIIIQLGPIALHWYGLGYVVGILFSWWYVQKLSHKKSLWYANYPPLNAEKASDFVVWAALGIVVGGRLGQVLIWDPTYYFNHPSSIIAVWDGGMSFHGGLIGTTIAIIWFARKHNINIWAMFDTIAAGAPFGIGVVRICNFINQELWGSVTNVPWAVCFSLDPQYLPRHPSQLYEALMEGFLLFIVLAFIIFAFKAFKRPGTVAGTFIISYGIARTISEIFRVPQEDPEWFSALFHGSGFTYGMALSLPMILFGFYAIFRAFRNHFIK</sequence>
<accession>A1UTG9</accession>
<organism>
    <name type="scientific">Bartonella bacilliformis (strain ATCC 35685 / KC583 / Herrer 020/F12,63)</name>
    <dbReference type="NCBI Taxonomy" id="360095"/>
    <lineage>
        <taxon>Bacteria</taxon>
        <taxon>Pseudomonadati</taxon>
        <taxon>Pseudomonadota</taxon>
        <taxon>Alphaproteobacteria</taxon>
        <taxon>Hyphomicrobiales</taxon>
        <taxon>Bartonellaceae</taxon>
        <taxon>Bartonella</taxon>
    </lineage>
</organism>
<proteinExistence type="inferred from homology"/>
<reference key="1">
    <citation type="submission" date="2006-12" db="EMBL/GenBank/DDBJ databases">
        <authorList>
            <person name="Hendrix L."/>
            <person name="Mohamoud Y."/>
            <person name="Radune D."/>
            <person name="Shvartsbeyn A."/>
            <person name="Daugherty S."/>
            <person name="Dodson R."/>
            <person name="Durkin A.S."/>
            <person name="Harkins D."/>
            <person name="Huot H."/>
            <person name="Kothari S.P."/>
            <person name="Madupu R."/>
            <person name="Li J."/>
            <person name="Nelson W.C."/>
            <person name="Shrivastava S."/>
            <person name="Giglio M.G."/>
            <person name="Haft D."/>
            <person name="Selengut J."/>
            <person name="Fraser-Ligget C."/>
            <person name="Seshadri R."/>
        </authorList>
    </citation>
    <scope>NUCLEOTIDE SEQUENCE [LARGE SCALE GENOMIC DNA]</scope>
    <source>
        <strain>ATCC 35685 / KC583 / Herrer 020/F12,63</strain>
    </source>
</reference>
<name>LGT_BARBK</name>
<dbReference type="EC" id="2.5.1.145" evidence="1"/>
<dbReference type="EMBL" id="CP000524">
    <property type="protein sequence ID" value="ABM45381.1"/>
    <property type="molecule type" value="Genomic_DNA"/>
</dbReference>
<dbReference type="RefSeq" id="WP_005767511.1">
    <property type="nucleotide sequence ID" value="NC_008783.1"/>
</dbReference>
<dbReference type="SMR" id="A1UTG9"/>
<dbReference type="STRING" id="360095.BARBAKC583_0994"/>
<dbReference type="GeneID" id="4684852"/>
<dbReference type="KEGG" id="bbk:BARBAKC583_0994"/>
<dbReference type="PATRIC" id="fig|360095.6.peg.962"/>
<dbReference type="eggNOG" id="COG0682">
    <property type="taxonomic scope" value="Bacteria"/>
</dbReference>
<dbReference type="HOGENOM" id="CLU_013386_1_0_5"/>
<dbReference type="OrthoDB" id="871140at2"/>
<dbReference type="UniPathway" id="UPA00664"/>
<dbReference type="Proteomes" id="UP000000643">
    <property type="component" value="Chromosome"/>
</dbReference>
<dbReference type="GO" id="GO:0005886">
    <property type="term" value="C:plasma membrane"/>
    <property type="evidence" value="ECO:0007669"/>
    <property type="project" value="UniProtKB-SubCell"/>
</dbReference>
<dbReference type="GO" id="GO:0008961">
    <property type="term" value="F:phosphatidylglycerol-prolipoprotein diacylglyceryl transferase activity"/>
    <property type="evidence" value="ECO:0007669"/>
    <property type="project" value="UniProtKB-UniRule"/>
</dbReference>
<dbReference type="GO" id="GO:0042158">
    <property type="term" value="P:lipoprotein biosynthetic process"/>
    <property type="evidence" value="ECO:0007669"/>
    <property type="project" value="UniProtKB-UniRule"/>
</dbReference>
<dbReference type="HAMAP" id="MF_01147">
    <property type="entry name" value="Lgt"/>
    <property type="match status" value="1"/>
</dbReference>
<dbReference type="InterPro" id="IPR001640">
    <property type="entry name" value="Lgt"/>
</dbReference>
<dbReference type="NCBIfam" id="TIGR00544">
    <property type="entry name" value="lgt"/>
    <property type="match status" value="1"/>
</dbReference>
<dbReference type="PANTHER" id="PTHR30589:SF0">
    <property type="entry name" value="PHOSPHATIDYLGLYCEROL--PROLIPOPROTEIN DIACYLGLYCERYL TRANSFERASE"/>
    <property type="match status" value="1"/>
</dbReference>
<dbReference type="PANTHER" id="PTHR30589">
    <property type="entry name" value="PROLIPOPROTEIN DIACYLGLYCERYL TRANSFERASE"/>
    <property type="match status" value="1"/>
</dbReference>
<dbReference type="Pfam" id="PF01790">
    <property type="entry name" value="LGT"/>
    <property type="match status" value="1"/>
</dbReference>
<keyword id="KW-0997">Cell inner membrane</keyword>
<keyword id="KW-1003">Cell membrane</keyword>
<keyword id="KW-0472">Membrane</keyword>
<keyword id="KW-0808">Transferase</keyword>
<keyword id="KW-0812">Transmembrane</keyword>
<keyword id="KW-1133">Transmembrane helix</keyword>
<feature type="chain" id="PRO_1000137401" description="Phosphatidylglycerol--prolipoprotein diacylglyceryl transferase">
    <location>
        <begin position="1"/>
        <end position="285"/>
    </location>
</feature>
<feature type="transmembrane region" description="Helical" evidence="1">
    <location>
        <begin position="26"/>
        <end position="46"/>
    </location>
</feature>
<feature type="transmembrane region" description="Helical" evidence="1">
    <location>
        <begin position="71"/>
        <end position="91"/>
    </location>
</feature>
<feature type="transmembrane region" description="Helical" evidence="1">
    <location>
        <begin position="107"/>
        <end position="127"/>
    </location>
</feature>
<feature type="transmembrane region" description="Helical" evidence="1">
    <location>
        <begin position="133"/>
        <end position="153"/>
    </location>
</feature>
<feature type="transmembrane region" description="Helical" evidence="1">
    <location>
        <begin position="194"/>
        <end position="214"/>
    </location>
</feature>
<feature type="transmembrane region" description="Helical" evidence="1">
    <location>
        <begin position="218"/>
        <end position="238"/>
    </location>
</feature>
<feature type="transmembrane region" description="Helical" evidence="1">
    <location>
        <begin position="256"/>
        <end position="276"/>
    </location>
</feature>
<feature type="binding site" evidence="1">
    <location>
        <position position="154"/>
    </location>
    <ligand>
        <name>a 1,2-diacyl-sn-glycero-3-phospho-(1'-sn-glycerol)</name>
        <dbReference type="ChEBI" id="CHEBI:64716"/>
    </ligand>
</feature>
<protein>
    <recommendedName>
        <fullName evidence="1">Phosphatidylglycerol--prolipoprotein diacylglyceryl transferase</fullName>
        <ecNumber evidence="1">2.5.1.145</ecNumber>
    </recommendedName>
</protein>
<evidence type="ECO:0000255" key="1">
    <source>
        <dbReference type="HAMAP-Rule" id="MF_01147"/>
    </source>
</evidence>
<gene>
    <name evidence="1" type="primary">lgt</name>
    <name type="ordered locus">BARBAKC583_0994</name>
</gene>